<comment type="function">
    <text evidence="1">Catalyzes the interconversion of 2-phosphoglycerate and 3-phosphoglycerate.</text>
</comment>
<comment type="catalytic activity">
    <reaction evidence="1">
        <text>(2R)-2-phosphoglycerate = (2R)-3-phosphoglycerate</text>
        <dbReference type="Rhea" id="RHEA:15901"/>
        <dbReference type="ChEBI" id="CHEBI:58272"/>
        <dbReference type="ChEBI" id="CHEBI:58289"/>
        <dbReference type="EC" id="5.4.2.11"/>
    </reaction>
</comment>
<comment type="pathway">
    <text evidence="1">Carbohydrate degradation; glycolysis; pyruvate from D-glyceraldehyde 3-phosphate: step 3/5.</text>
</comment>
<comment type="similarity">
    <text evidence="1">Belongs to the phosphoglycerate mutase family. BPG-dependent PGAM subfamily.</text>
</comment>
<dbReference type="EC" id="5.4.2.11" evidence="1"/>
<dbReference type="EMBL" id="CP000730">
    <property type="protein sequence ID" value="ABX30388.1"/>
    <property type="molecule type" value="Genomic_DNA"/>
</dbReference>
<dbReference type="RefSeq" id="WP_001125208.1">
    <property type="nucleotide sequence ID" value="NC_010079.1"/>
</dbReference>
<dbReference type="SMR" id="A8YYG4"/>
<dbReference type="KEGG" id="sax:USA300HOU_2398"/>
<dbReference type="HOGENOM" id="CLU_033323_1_5_9"/>
<dbReference type="UniPathway" id="UPA00109">
    <property type="reaction ID" value="UER00186"/>
</dbReference>
<dbReference type="GO" id="GO:0004619">
    <property type="term" value="F:phosphoglycerate mutase activity"/>
    <property type="evidence" value="ECO:0007669"/>
    <property type="project" value="UniProtKB-EC"/>
</dbReference>
<dbReference type="GO" id="GO:0006094">
    <property type="term" value="P:gluconeogenesis"/>
    <property type="evidence" value="ECO:0007669"/>
    <property type="project" value="UniProtKB-UniRule"/>
</dbReference>
<dbReference type="GO" id="GO:0006096">
    <property type="term" value="P:glycolytic process"/>
    <property type="evidence" value="ECO:0007669"/>
    <property type="project" value="UniProtKB-UniRule"/>
</dbReference>
<dbReference type="CDD" id="cd07067">
    <property type="entry name" value="HP_PGM_like"/>
    <property type="match status" value="1"/>
</dbReference>
<dbReference type="FunFam" id="3.40.50.1240:FF:000003">
    <property type="entry name" value="2,3-bisphosphoglycerate-dependent phosphoglycerate mutase"/>
    <property type="match status" value="1"/>
</dbReference>
<dbReference type="Gene3D" id="3.40.50.1240">
    <property type="entry name" value="Phosphoglycerate mutase-like"/>
    <property type="match status" value="1"/>
</dbReference>
<dbReference type="HAMAP" id="MF_01039">
    <property type="entry name" value="PGAM_GpmA"/>
    <property type="match status" value="1"/>
</dbReference>
<dbReference type="InterPro" id="IPR013078">
    <property type="entry name" value="His_Pase_superF_clade-1"/>
</dbReference>
<dbReference type="InterPro" id="IPR029033">
    <property type="entry name" value="His_PPase_superfam"/>
</dbReference>
<dbReference type="InterPro" id="IPR001345">
    <property type="entry name" value="PG/BPGM_mutase_AS"/>
</dbReference>
<dbReference type="InterPro" id="IPR005952">
    <property type="entry name" value="Phosphogly_mut1"/>
</dbReference>
<dbReference type="NCBIfam" id="TIGR01258">
    <property type="entry name" value="pgm_1"/>
    <property type="match status" value="1"/>
</dbReference>
<dbReference type="NCBIfam" id="NF010713">
    <property type="entry name" value="PRK14115.1"/>
    <property type="match status" value="1"/>
</dbReference>
<dbReference type="NCBIfam" id="NF010717">
    <property type="entry name" value="PRK14119.1"/>
    <property type="match status" value="1"/>
</dbReference>
<dbReference type="PANTHER" id="PTHR11931">
    <property type="entry name" value="PHOSPHOGLYCERATE MUTASE"/>
    <property type="match status" value="1"/>
</dbReference>
<dbReference type="Pfam" id="PF00300">
    <property type="entry name" value="His_Phos_1"/>
    <property type="match status" value="1"/>
</dbReference>
<dbReference type="PIRSF" id="PIRSF000709">
    <property type="entry name" value="6PFK_2-Ptase"/>
    <property type="match status" value="1"/>
</dbReference>
<dbReference type="SMART" id="SM00855">
    <property type="entry name" value="PGAM"/>
    <property type="match status" value="1"/>
</dbReference>
<dbReference type="SUPFAM" id="SSF53254">
    <property type="entry name" value="Phosphoglycerate mutase-like"/>
    <property type="match status" value="1"/>
</dbReference>
<dbReference type="PROSITE" id="PS00175">
    <property type="entry name" value="PG_MUTASE"/>
    <property type="match status" value="1"/>
</dbReference>
<evidence type="ECO:0000255" key="1">
    <source>
        <dbReference type="HAMAP-Rule" id="MF_01039"/>
    </source>
</evidence>
<sequence>MPKLILCRHGQSEWNAKNLFTGWEDVNLSEQGINEATRAGEKVRENNIAIDVAFTSLLTRALDTTHYILTESKQQWIPVYKSWRLNERHYGGLQGLNKDDARKEFGEEQVHIWRRSYDVKPPAETEEQREAYLADRRYNHLDKRMMPYSESLKDTLVRVIPFWTDHISQYLLDGQTVLVSAHGNSIRALIKYLEDVSDEDIINYEIKTGAPLVYELTDDLEVIDKYYL</sequence>
<protein>
    <recommendedName>
        <fullName evidence="1">2,3-bisphosphoglycerate-dependent phosphoglycerate mutase</fullName>
        <shortName evidence="1">BPG-dependent PGAM</shortName>
        <shortName evidence="1">PGAM</shortName>
        <shortName evidence="1">Phosphoglyceromutase</shortName>
        <shortName evidence="1">dPGM</shortName>
        <ecNumber evidence="1">5.4.2.11</ecNumber>
    </recommendedName>
</protein>
<reference key="1">
    <citation type="journal article" date="2007" name="BMC Microbiol.">
        <title>Subtle genetic changes enhance virulence of methicillin resistant and sensitive Staphylococcus aureus.</title>
        <authorList>
            <person name="Highlander S.K."/>
            <person name="Hulten K.G."/>
            <person name="Qin X."/>
            <person name="Jiang H."/>
            <person name="Yerrapragada S."/>
            <person name="Mason E.O. Jr."/>
            <person name="Shang Y."/>
            <person name="Williams T.M."/>
            <person name="Fortunov R.M."/>
            <person name="Liu Y."/>
            <person name="Igboeli O."/>
            <person name="Petrosino J."/>
            <person name="Tirumalai M."/>
            <person name="Uzman A."/>
            <person name="Fox G.E."/>
            <person name="Cardenas A.M."/>
            <person name="Muzny D.M."/>
            <person name="Hemphill L."/>
            <person name="Ding Y."/>
            <person name="Dugan S."/>
            <person name="Blyth P.R."/>
            <person name="Buhay C.J."/>
            <person name="Dinh H.H."/>
            <person name="Hawes A.C."/>
            <person name="Holder M."/>
            <person name="Kovar C.L."/>
            <person name="Lee S.L."/>
            <person name="Liu W."/>
            <person name="Nazareth L.V."/>
            <person name="Wang Q."/>
            <person name="Zhou J."/>
            <person name="Kaplan S.L."/>
            <person name="Weinstock G.M."/>
        </authorList>
    </citation>
    <scope>NUCLEOTIDE SEQUENCE [LARGE SCALE GENOMIC DNA]</scope>
    <source>
        <strain>USA300 / TCH1516</strain>
    </source>
</reference>
<name>GPMA_STAAT</name>
<accession>A8YYG4</accession>
<gene>
    <name evidence="1" type="primary">gpmA</name>
    <name type="ordered locus">USA300HOU_2398</name>
</gene>
<feature type="chain" id="PRO_1000084333" description="2,3-bisphosphoglycerate-dependent phosphoglycerate mutase">
    <location>
        <begin position="1"/>
        <end position="228"/>
    </location>
</feature>
<feature type="active site" description="Tele-phosphohistidine intermediate" evidence="1">
    <location>
        <position position="9"/>
    </location>
</feature>
<feature type="active site" description="Proton donor/acceptor" evidence="1">
    <location>
        <position position="87"/>
    </location>
</feature>
<feature type="binding site" evidence="1">
    <location>
        <begin position="8"/>
        <end position="15"/>
    </location>
    <ligand>
        <name>substrate</name>
    </ligand>
</feature>
<feature type="binding site" evidence="1">
    <location>
        <begin position="21"/>
        <end position="22"/>
    </location>
    <ligand>
        <name>substrate</name>
    </ligand>
</feature>
<feature type="binding site" evidence="1">
    <location>
        <position position="60"/>
    </location>
    <ligand>
        <name>substrate</name>
    </ligand>
</feature>
<feature type="binding site" evidence="1">
    <location>
        <begin position="87"/>
        <end position="90"/>
    </location>
    <ligand>
        <name>substrate</name>
    </ligand>
</feature>
<feature type="binding site" evidence="1">
    <location>
        <position position="98"/>
    </location>
    <ligand>
        <name>substrate</name>
    </ligand>
</feature>
<feature type="binding site" evidence="1">
    <location>
        <begin position="114"/>
        <end position="115"/>
    </location>
    <ligand>
        <name>substrate</name>
    </ligand>
</feature>
<feature type="binding site" evidence="1">
    <location>
        <begin position="183"/>
        <end position="184"/>
    </location>
    <ligand>
        <name>substrate</name>
    </ligand>
</feature>
<feature type="site" description="Transition state stabilizer" evidence="1">
    <location>
        <position position="182"/>
    </location>
</feature>
<keyword id="KW-0312">Gluconeogenesis</keyword>
<keyword id="KW-0324">Glycolysis</keyword>
<keyword id="KW-0413">Isomerase</keyword>
<proteinExistence type="inferred from homology"/>
<organism>
    <name type="scientific">Staphylococcus aureus (strain USA300 / TCH1516)</name>
    <dbReference type="NCBI Taxonomy" id="451516"/>
    <lineage>
        <taxon>Bacteria</taxon>
        <taxon>Bacillati</taxon>
        <taxon>Bacillota</taxon>
        <taxon>Bacilli</taxon>
        <taxon>Bacillales</taxon>
        <taxon>Staphylococcaceae</taxon>
        <taxon>Staphylococcus</taxon>
    </lineage>
</organism>